<reference key="1">
    <citation type="journal article" date="2008" name="PLoS ONE">
        <title>Genome biology of Actinobacillus pleuropneumoniae JL03, an isolate of serotype 3 prevalent in China.</title>
        <authorList>
            <person name="Xu Z."/>
            <person name="Zhou Y."/>
            <person name="Li L."/>
            <person name="Zhou R."/>
            <person name="Xiao S."/>
            <person name="Wan Y."/>
            <person name="Zhang S."/>
            <person name="Wang K."/>
            <person name="Li W."/>
            <person name="Li L."/>
            <person name="Jin H."/>
            <person name="Kang M."/>
            <person name="Dalai B."/>
            <person name="Li T."/>
            <person name="Liu L."/>
            <person name="Cheng Y."/>
            <person name="Zhang L."/>
            <person name="Xu T."/>
            <person name="Zheng H."/>
            <person name="Pu S."/>
            <person name="Wang B."/>
            <person name="Gu W."/>
            <person name="Zhang X.L."/>
            <person name="Zhu G.-F."/>
            <person name="Wang S."/>
            <person name="Zhao G.-P."/>
            <person name="Chen H."/>
        </authorList>
    </citation>
    <scope>NUCLEOTIDE SEQUENCE [LARGE SCALE GENOMIC DNA]</scope>
    <source>
        <strain>JL03</strain>
    </source>
</reference>
<proteinExistence type="inferred from homology"/>
<evidence type="ECO:0000255" key="1">
    <source>
        <dbReference type="HAMAP-Rule" id="MF_00530"/>
    </source>
</evidence>
<organism>
    <name type="scientific">Actinobacillus pleuropneumoniae serotype 3 (strain JL03)</name>
    <dbReference type="NCBI Taxonomy" id="434271"/>
    <lineage>
        <taxon>Bacteria</taxon>
        <taxon>Pseudomonadati</taxon>
        <taxon>Pseudomonadota</taxon>
        <taxon>Gammaproteobacteria</taxon>
        <taxon>Pasteurellales</taxon>
        <taxon>Pasteurellaceae</taxon>
        <taxon>Actinobacillus</taxon>
    </lineage>
</organism>
<protein>
    <recommendedName>
        <fullName evidence="1">ATP synthase epsilon chain</fullName>
    </recommendedName>
    <alternativeName>
        <fullName evidence="1">ATP synthase F1 sector epsilon subunit</fullName>
    </alternativeName>
    <alternativeName>
        <fullName evidence="1">F-ATPase epsilon subunit</fullName>
    </alternativeName>
</protein>
<comment type="function">
    <text evidence="1">Produces ATP from ADP in the presence of a proton gradient across the membrane.</text>
</comment>
<comment type="subunit">
    <text evidence="1">F-type ATPases have 2 components, CF(1) - the catalytic core - and CF(0) - the membrane proton channel. CF(1) has five subunits: alpha(3), beta(3), gamma(1), delta(1), epsilon(1). CF(0) has three main subunits: a, b and c.</text>
</comment>
<comment type="subcellular location">
    <subcellularLocation>
        <location evidence="1">Cell inner membrane</location>
        <topology evidence="1">Peripheral membrane protein</topology>
    </subcellularLocation>
</comment>
<comment type="similarity">
    <text evidence="1">Belongs to the ATPase epsilon chain family.</text>
</comment>
<gene>
    <name evidence="1" type="primary">atpC</name>
    <name type="ordered locus">APJL_1678</name>
</gene>
<accession>B0BRX1</accession>
<feature type="chain" id="PRO_1000127820" description="ATP synthase epsilon chain">
    <location>
        <begin position="1"/>
        <end position="139"/>
    </location>
</feature>
<name>ATPE_ACTPJ</name>
<sequence>MASQFELSVVSAEKEIFNGNVVSVRVTGIDGELGVYAGHTPLLTSIKPGMVKYTLEDGKEEFIYVSGGFLEVQPTIVTVLADVAIRGEELDQQRILAAKRKAEDTLSKSNNAELSAKLSREIAKLRVYEIVNSKLANRR</sequence>
<keyword id="KW-0066">ATP synthesis</keyword>
<keyword id="KW-0997">Cell inner membrane</keyword>
<keyword id="KW-1003">Cell membrane</keyword>
<keyword id="KW-0139">CF(1)</keyword>
<keyword id="KW-0375">Hydrogen ion transport</keyword>
<keyword id="KW-0406">Ion transport</keyword>
<keyword id="KW-0472">Membrane</keyword>
<keyword id="KW-0813">Transport</keyword>
<dbReference type="EMBL" id="CP000687">
    <property type="protein sequence ID" value="ABY70230.1"/>
    <property type="molecule type" value="Genomic_DNA"/>
</dbReference>
<dbReference type="RefSeq" id="WP_005602397.1">
    <property type="nucleotide sequence ID" value="NC_010278.1"/>
</dbReference>
<dbReference type="SMR" id="B0BRX1"/>
<dbReference type="KEGG" id="apj:APJL_1678"/>
<dbReference type="HOGENOM" id="CLU_084338_2_0_6"/>
<dbReference type="Proteomes" id="UP000008547">
    <property type="component" value="Chromosome"/>
</dbReference>
<dbReference type="GO" id="GO:0005886">
    <property type="term" value="C:plasma membrane"/>
    <property type="evidence" value="ECO:0007669"/>
    <property type="project" value="UniProtKB-SubCell"/>
</dbReference>
<dbReference type="GO" id="GO:0045259">
    <property type="term" value="C:proton-transporting ATP synthase complex"/>
    <property type="evidence" value="ECO:0007669"/>
    <property type="project" value="UniProtKB-KW"/>
</dbReference>
<dbReference type="GO" id="GO:0005524">
    <property type="term" value="F:ATP binding"/>
    <property type="evidence" value="ECO:0007669"/>
    <property type="project" value="UniProtKB-UniRule"/>
</dbReference>
<dbReference type="GO" id="GO:0046933">
    <property type="term" value="F:proton-transporting ATP synthase activity, rotational mechanism"/>
    <property type="evidence" value="ECO:0007669"/>
    <property type="project" value="UniProtKB-UniRule"/>
</dbReference>
<dbReference type="CDD" id="cd12152">
    <property type="entry name" value="F1-ATPase_delta"/>
    <property type="match status" value="1"/>
</dbReference>
<dbReference type="FunFam" id="2.60.15.10:FF:000001">
    <property type="entry name" value="ATP synthase epsilon chain"/>
    <property type="match status" value="1"/>
</dbReference>
<dbReference type="Gene3D" id="2.60.15.10">
    <property type="entry name" value="F0F1 ATP synthase delta/epsilon subunit, N-terminal"/>
    <property type="match status" value="1"/>
</dbReference>
<dbReference type="HAMAP" id="MF_00530">
    <property type="entry name" value="ATP_synth_epsil_bac"/>
    <property type="match status" value="1"/>
</dbReference>
<dbReference type="InterPro" id="IPR036794">
    <property type="entry name" value="ATP_F1_dsu/esu_C_sf"/>
</dbReference>
<dbReference type="InterPro" id="IPR001469">
    <property type="entry name" value="ATP_synth_F1_dsu/esu"/>
</dbReference>
<dbReference type="InterPro" id="IPR020546">
    <property type="entry name" value="ATP_synth_F1_dsu/esu_N"/>
</dbReference>
<dbReference type="InterPro" id="IPR036771">
    <property type="entry name" value="ATPsynth_dsu/esu_N"/>
</dbReference>
<dbReference type="NCBIfam" id="TIGR01216">
    <property type="entry name" value="ATP_synt_epsi"/>
    <property type="match status" value="1"/>
</dbReference>
<dbReference type="NCBIfam" id="NF001847">
    <property type="entry name" value="PRK00571.1-4"/>
    <property type="match status" value="1"/>
</dbReference>
<dbReference type="PANTHER" id="PTHR13822">
    <property type="entry name" value="ATP SYNTHASE DELTA/EPSILON CHAIN"/>
    <property type="match status" value="1"/>
</dbReference>
<dbReference type="PANTHER" id="PTHR13822:SF10">
    <property type="entry name" value="ATP SYNTHASE EPSILON CHAIN, CHLOROPLASTIC"/>
    <property type="match status" value="1"/>
</dbReference>
<dbReference type="Pfam" id="PF02823">
    <property type="entry name" value="ATP-synt_DE_N"/>
    <property type="match status" value="1"/>
</dbReference>
<dbReference type="SUPFAM" id="SSF46604">
    <property type="entry name" value="Epsilon subunit of F1F0-ATP synthase C-terminal domain"/>
    <property type="match status" value="1"/>
</dbReference>
<dbReference type="SUPFAM" id="SSF51344">
    <property type="entry name" value="Epsilon subunit of F1F0-ATP synthase N-terminal domain"/>
    <property type="match status" value="1"/>
</dbReference>